<sequence>SSRTVLSNISNIQRRPQVVGKIKKEDGVALEEKAPLNKGLGRMVSQSNLISDVQLKTTKIIPAYQDIADVEVPINAMINSFTELEVDDIDLEDLGNPTLCAEYLKDIYKYMNKLERRLEPSDYMAHQAEINFKMRSILVDWLIQVQSRFNLLQETLYLTIYIIDRYLSKQNVKRAELQLEGVTAMLIASKYEEMYAPEIGDFVYITDNAYSKEKIRQMEQKMLKTCEYDFSNPLCLHFLRRNSKAGAVDAQKHTLAKYLMELTLVEYEFITKLPSEIAAAALYLALKLIDDSNWTPTLAHYSGYTEDEILSTVSKLSILTLSMDNSKYQAVKNKYSASKFLRISLIPQLKGHILSKFAERN</sequence>
<accession>P51988</accession>
<evidence type="ECO:0000250" key="1"/>
<evidence type="ECO:0000305" key="2"/>
<protein>
    <recommendedName>
        <fullName>G2/mitotic-specific cyclin-B</fullName>
    </recommendedName>
</protein>
<comment type="function">
    <text evidence="1">Essential for the control of the cell cycle at the G2/M (mitosis) transition. Interacts with the CDC2 protein kinase to form MPF. G2/M cyclins accumulate steadily during G2 and are abruptly destroyed at mitosis (By similarity).</text>
</comment>
<comment type="similarity">
    <text evidence="2">Belongs to the cyclin family. Cyclin AB subfamily.</text>
</comment>
<dbReference type="EMBL" id="X90985">
    <property type="protein sequence ID" value="CAA62472.1"/>
    <property type="molecule type" value="mRNA"/>
</dbReference>
<dbReference type="SMR" id="P51988"/>
<dbReference type="OrthoDB" id="5590282at2759"/>
<dbReference type="Proteomes" id="UP000694840">
    <property type="component" value="Unplaced"/>
</dbReference>
<dbReference type="GO" id="GO:0051301">
    <property type="term" value="P:cell division"/>
    <property type="evidence" value="ECO:0007669"/>
    <property type="project" value="UniProtKB-KW"/>
</dbReference>
<dbReference type="CDD" id="cd20507">
    <property type="entry name" value="CYCLIN_CCNB1-like_rpt1"/>
    <property type="match status" value="1"/>
</dbReference>
<dbReference type="CDD" id="cd20509">
    <property type="entry name" value="CYCLIN_CCNB1-like_rpt2"/>
    <property type="match status" value="1"/>
</dbReference>
<dbReference type="FunFam" id="1.10.472.10:FF:000001">
    <property type="entry name" value="G2/mitotic-specific cyclin"/>
    <property type="match status" value="1"/>
</dbReference>
<dbReference type="Gene3D" id="1.10.472.10">
    <property type="entry name" value="Cyclin-like"/>
    <property type="match status" value="2"/>
</dbReference>
<dbReference type="InterPro" id="IPR039361">
    <property type="entry name" value="Cyclin"/>
</dbReference>
<dbReference type="InterPro" id="IPR013763">
    <property type="entry name" value="Cyclin-like_dom"/>
</dbReference>
<dbReference type="InterPro" id="IPR036915">
    <property type="entry name" value="Cyclin-like_sf"/>
</dbReference>
<dbReference type="InterPro" id="IPR004367">
    <property type="entry name" value="Cyclin_C-dom"/>
</dbReference>
<dbReference type="InterPro" id="IPR006671">
    <property type="entry name" value="Cyclin_N"/>
</dbReference>
<dbReference type="InterPro" id="IPR048258">
    <property type="entry name" value="Cyclins_cyclin-box"/>
</dbReference>
<dbReference type="PANTHER" id="PTHR10177">
    <property type="entry name" value="CYCLINS"/>
    <property type="match status" value="1"/>
</dbReference>
<dbReference type="Pfam" id="PF02984">
    <property type="entry name" value="Cyclin_C"/>
    <property type="match status" value="1"/>
</dbReference>
<dbReference type="Pfam" id="PF00134">
    <property type="entry name" value="Cyclin_N"/>
    <property type="match status" value="1"/>
</dbReference>
<dbReference type="SMART" id="SM00385">
    <property type="entry name" value="CYCLIN"/>
    <property type="match status" value="2"/>
</dbReference>
<dbReference type="SMART" id="SM01332">
    <property type="entry name" value="Cyclin_C"/>
    <property type="match status" value="1"/>
</dbReference>
<dbReference type="SUPFAM" id="SSF47954">
    <property type="entry name" value="Cyclin-like"/>
    <property type="match status" value="2"/>
</dbReference>
<dbReference type="PROSITE" id="PS00292">
    <property type="entry name" value="CYCLINS"/>
    <property type="match status" value="1"/>
</dbReference>
<reference key="1">
    <citation type="journal article" date="1996" name="J. Cell Sci.">
        <title>Presence and expression of G2 cyclins in the coelenterate hydra.</title>
        <authorList>
            <person name="Scheurlen-Blchle I."/>
            <person name="Hoffmeister S."/>
            <person name="Herrmans-Borgmeyer I."/>
            <person name="Schaller H.C."/>
        </authorList>
    </citation>
    <scope>NUCLEOTIDE SEQUENCE [MRNA]</scope>
</reference>
<name>CCNB_HYDVU</name>
<feature type="chain" id="PRO_0000080383" description="G2/mitotic-specific cyclin-B">
    <location>
        <begin position="1" status="less than"/>
        <end position="361"/>
    </location>
</feature>
<feature type="non-terminal residue">
    <location>
        <position position="1"/>
    </location>
</feature>
<proteinExistence type="evidence at transcript level"/>
<keyword id="KW-0131">Cell cycle</keyword>
<keyword id="KW-0132">Cell division</keyword>
<keyword id="KW-0195">Cyclin</keyword>
<keyword id="KW-0498">Mitosis</keyword>
<keyword id="KW-1185">Reference proteome</keyword>
<organism>
    <name type="scientific">Hydra vulgaris</name>
    <name type="common">Hydra</name>
    <name type="synonym">Hydra attenuata</name>
    <dbReference type="NCBI Taxonomy" id="6087"/>
    <lineage>
        <taxon>Eukaryota</taxon>
        <taxon>Metazoa</taxon>
        <taxon>Cnidaria</taxon>
        <taxon>Hydrozoa</taxon>
        <taxon>Hydroidolina</taxon>
        <taxon>Anthoathecata</taxon>
        <taxon>Aplanulata</taxon>
        <taxon>Hydridae</taxon>
        <taxon>Hydra</taxon>
    </lineage>
</organism>